<proteinExistence type="inferred from homology"/>
<organism>
    <name type="scientific">Xanthomonas oryzae pv. oryzae (strain KACC10331 / KXO85)</name>
    <dbReference type="NCBI Taxonomy" id="291331"/>
    <lineage>
        <taxon>Bacteria</taxon>
        <taxon>Pseudomonadati</taxon>
        <taxon>Pseudomonadota</taxon>
        <taxon>Gammaproteobacteria</taxon>
        <taxon>Lysobacterales</taxon>
        <taxon>Lysobacteraceae</taxon>
        <taxon>Xanthomonas</taxon>
    </lineage>
</organism>
<accession>Q5H5M1</accession>
<gene>
    <name type="ordered locus">XOO0495</name>
</gene>
<sequence>MHIHDWPTNERPREKLLARGATALSDAELLAIFVGSGLRGQDAVQTARDLLHRHGPLRPLLDRPAKALERLPGLGPASACKLAAALELAHRHLMSALERGEALSDPPSVGRYFSQRLRARAYEVFAVLFLDNRHRAIAFEELFTGTIDGADIHPREVVRRALLHNAAAVIVGHNHPSGNPEPSKADRAVTKRLLDSLELVDIRLLDHFVIGDGRPVSLAERGWLE</sequence>
<comment type="similarity">
    <text evidence="2">Belongs to the UPF0758 family.</text>
</comment>
<comment type="sequence caution" evidence="2">
    <conflict type="erroneous initiation">
        <sequence resource="EMBL-CDS" id="AAW73749"/>
    </conflict>
</comment>
<dbReference type="EMBL" id="AE013598">
    <property type="protein sequence ID" value="AAW73749.1"/>
    <property type="status" value="ALT_INIT"/>
    <property type="molecule type" value="Genomic_DNA"/>
</dbReference>
<dbReference type="SMR" id="Q5H5M1"/>
<dbReference type="STRING" id="291331.XOO0495"/>
<dbReference type="KEGG" id="xoo:XOO0495"/>
<dbReference type="HOGENOM" id="CLU_073529_0_1_6"/>
<dbReference type="Proteomes" id="UP000006735">
    <property type="component" value="Chromosome"/>
</dbReference>
<dbReference type="GO" id="GO:0046872">
    <property type="term" value="F:metal ion binding"/>
    <property type="evidence" value="ECO:0007669"/>
    <property type="project" value="UniProtKB-KW"/>
</dbReference>
<dbReference type="GO" id="GO:0008237">
    <property type="term" value="F:metallopeptidase activity"/>
    <property type="evidence" value="ECO:0007669"/>
    <property type="project" value="UniProtKB-KW"/>
</dbReference>
<dbReference type="GO" id="GO:0006508">
    <property type="term" value="P:proteolysis"/>
    <property type="evidence" value="ECO:0007669"/>
    <property type="project" value="UniProtKB-KW"/>
</dbReference>
<dbReference type="CDD" id="cd08071">
    <property type="entry name" value="MPN_DUF2466"/>
    <property type="match status" value="1"/>
</dbReference>
<dbReference type="Gene3D" id="3.40.140.10">
    <property type="entry name" value="Cytidine Deaminase, domain 2"/>
    <property type="match status" value="1"/>
</dbReference>
<dbReference type="InterPro" id="IPR037518">
    <property type="entry name" value="MPN"/>
</dbReference>
<dbReference type="InterPro" id="IPR025657">
    <property type="entry name" value="RadC_JAB"/>
</dbReference>
<dbReference type="InterPro" id="IPR010994">
    <property type="entry name" value="RuvA_2-like"/>
</dbReference>
<dbReference type="InterPro" id="IPR001405">
    <property type="entry name" value="UPF0758"/>
</dbReference>
<dbReference type="InterPro" id="IPR020891">
    <property type="entry name" value="UPF0758_CS"/>
</dbReference>
<dbReference type="InterPro" id="IPR046778">
    <property type="entry name" value="UPF0758_N"/>
</dbReference>
<dbReference type="NCBIfam" id="NF000642">
    <property type="entry name" value="PRK00024.1"/>
    <property type="match status" value="1"/>
</dbReference>
<dbReference type="NCBIfam" id="TIGR00608">
    <property type="entry name" value="radc"/>
    <property type="match status" value="1"/>
</dbReference>
<dbReference type="PANTHER" id="PTHR30471">
    <property type="entry name" value="DNA REPAIR PROTEIN RADC"/>
    <property type="match status" value="1"/>
</dbReference>
<dbReference type="PANTHER" id="PTHR30471:SF3">
    <property type="entry name" value="UPF0758 PROTEIN YEES-RELATED"/>
    <property type="match status" value="1"/>
</dbReference>
<dbReference type="Pfam" id="PF04002">
    <property type="entry name" value="RadC"/>
    <property type="match status" value="1"/>
</dbReference>
<dbReference type="Pfam" id="PF20582">
    <property type="entry name" value="UPF0758_N"/>
    <property type="match status" value="1"/>
</dbReference>
<dbReference type="SUPFAM" id="SSF47781">
    <property type="entry name" value="RuvA domain 2-like"/>
    <property type="match status" value="1"/>
</dbReference>
<dbReference type="PROSITE" id="PS50249">
    <property type="entry name" value="MPN"/>
    <property type="match status" value="1"/>
</dbReference>
<dbReference type="PROSITE" id="PS01302">
    <property type="entry name" value="UPF0758"/>
    <property type="match status" value="1"/>
</dbReference>
<protein>
    <recommendedName>
        <fullName>UPF0758 protein XOO0495</fullName>
    </recommendedName>
</protein>
<reference key="1">
    <citation type="journal article" date="2005" name="Nucleic Acids Res.">
        <title>The genome sequence of Xanthomonas oryzae pathovar oryzae KACC10331, the bacterial blight pathogen of rice.</title>
        <authorList>
            <person name="Lee B.-M."/>
            <person name="Park Y.-J."/>
            <person name="Park D.-S."/>
            <person name="Kang H.-W."/>
            <person name="Kim J.-G."/>
            <person name="Song E.-S."/>
            <person name="Park I.-C."/>
            <person name="Yoon U.-H."/>
            <person name="Hahn J.-H."/>
            <person name="Koo B.-S."/>
            <person name="Lee G.-B."/>
            <person name="Kim H."/>
            <person name="Park H.-S."/>
            <person name="Yoon K.-O."/>
            <person name="Kim J.-H."/>
            <person name="Jung C.-H."/>
            <person name="Koh N.-H."/>
            <person name="Seo J.-S."/>
            <person name="Go S.-J."/>
        </authorList>
    </citation>
    <scope>NUCLEOTIDE SEQUENCE [LARGE SCALE GENOMIC DNA]</scope>
    <source>
        <strain>KACC10331 / KXO85</strain>
    </source>
</reference>
<name>Y495_XANOR</name>
<keyword id="KW-0378">Hydrolase</keyword>
<keyword id="KW-0479">Metal-binding</keyword>
<keyword id="KW-0482">Metalloprotease</keyword>
<keyword id="KW-0645">Protease</keyword>
<keyword id="KW-1185">Reference proteome</keyword>
<keyword id="KW-0862">Zinc</keyword>
<evidence type="ECO:0000255" key="1">
    <source>
        <dbReference type="PROSITE-ProRule" id="PRU01182"/>
    </source>
</evidence>
<evidence type="ECO:0000305" key="2"/>
<feature type="chain" id="PRO_0000322708" description="UPF0758 protein XOO0495">
    <location>
        <begin position="1"/>
        <end position="225"/>
    </location>
</feature>
<feature type="domain" description="MPN" evidence="1">
    <location>
        <begin position="102"/>
        <end position="224"/>
    </location>
</feature>
<feature type="short sequence motif" description="JAMM motif" evidence="1">
    <location>
        <begin position="173"/>
        <end position="186"/>
    </location>
</feature>
<feature type="binding site" evidence="1">
    <location>
        <position position="173"/>
    </location>
    <ligand>
        <name>Zn(2+)</name>
        <dbReference type="ChEBI" id="CHEBI:29105"/>
        <note>catalytic</note>
    </ligand>
</feature>
<feature type="binding site" evidence="1">
    <location>
        <position position="175"/>
    </location>
    <ligand>
        <name>Zn(2+)</name>
        <dbReference type="ChEBI" id="CHEBI:29105"/>
        <note>catalytic</note>
    </ligand>
</feature>
<feature type="binding site" evidence="1">
    <location>
        <position position="186"/>
    </location>
    <ligand>
        <name>Zn(2+)</name>
        <dbReference type="ChEBI" id="CHEBI:29105"/>
        <note>catalytic</note>
    </ligand>
</feature>